<protein>
    <recommendedName>
        <fullName evidence="5">Alpha-1,3-mannosyl-glycoprotein 4-beta-N-acetylglucosaminyltransferase B</fullName>
        <ecNumber evidence="3">2.4.1.145</ecNumber>
    </recommendedName>
    <alternativeName>
        <fullName>N-glycosyl-oligosaccharide-glycoprotein N-acetylglucosaminyltransferase IVb</fullName>
        <shortName>GlcNAc-T IVb</shortName>
        <shortName>GnT-IVb</shortName>
        <shortName>N-acetylglucosaminyltransferase IVb</shortName>
    </alternativeName>
    <alternativeName>
        <fullName>UDP-N-acetylglucosamine: alpha-1,3-D-mannoside beta-1,4-N-acetylglucosaminyltransferase IVb</fullName>
    </alternativeName>
</protein>
<name>MGT4B_MOUSE</name>
<organism>
    <name type="scientific">Mus musculus</name>
    <name type="common">Mouse</name>
    <dbReference type="NCBI Taxonomy" id="10090"/>
    <lineage>
        <taxon>Eukaryota</taxon>
        <taxon>Metazoa</taxon>
        <taxon>Chordata</taxon>
        <taxon>Craniata</taxon>
        <taxon>Vertebrata</taxon>
        <taxon>Euteleostomi</taxon>
        <taxon>Mammalia</taxon>
        <taxon>Eutheria</taxon>
        <taxon>Euarchontoglires</taxon>
        <taxon>Glires</taxon>
        <taxon>Rodentia</taxon>
        <taxon>Myomorpha</taxon>
        <taxon>Muroidea</taxon>
        <taxon>Muridae</taxon>
        <taxon>Murinae</taxon>
        <taxon>Mus</taxon>
        <taxon>Mus</taxon>
    </lineage>
</organism>
<dbReference type="EC" id="2.4.1.145" evidence="3"/>
<dbReference type="EMBL" id="AB053218">
    <property type="protein sequence ID" value="BAC55019.1"/>
    <property type="molecule type" value="mRNA"/>
</dbReference>
<dbReference type="EMBL" id="AB053219">
    <property type="protein sequence ID" value="BAC55020.1"/>
    <property type="molecule type" value="Genomic_DNA"/>
</dbReference>
<dbReference type="EMBL" id="AL627187">
    <property type="status" value="NOT_ANNOTATED_CDS"/>
    <property type="molecule type" value="Genomic_DNA"/>
</dbReference>
<dbReference type="EMBL" id="AK155336">
    <property type="protein sequence ID" value="BAE33202.1"/>
    <property type="molecule type" value="mRNA"/>
</dbReference>
<dbReference type="EMBL" id="BC026638">
    <property type="protein sequence ID" value="AAH26638.1"/>
    <property type="status" value="ALT_INIT"/>
    <property type="molecule type" value="mRNA"/>
</dbReference>
<dbReference type="EMBL" id="BC031613">
    <property type="protein sequence ID" value="AAH31613.1"/>
    <property type="status" value="ALT_INIT"/>
    <property type="molecule type" value="mRNA"/>
</dbReference>
<dbReference type="CCDS" id="CCDS24630.1"/>
<dbReference type="RefSeq" id="NP_666038.3">
    <property type="nucleotide sequence ID" value="NM_145926.3"/>
</dbReference>
<dbReference type="SMR" id="Q812F8"/>
<dbReference type="BioGRID" id="222108">
    <property type="interactions" value="1"/>
</dbReference>
<dbReference type="FunCoup" id="Q812F8">
    <property type="interactions" value="1516"/>
</dbReference>
<dbReference type="STRING" id="10090.ENSMUSP00000043346"/>
<dbReference type="CAZy" id="GT54">
    <property type="family name" value="Glycosyltransferase Family 54"/>
</dbReference>
<dbReference type="GlyCosmos" id="Q812F8">
    <property type="glycosylation" value="2 sites, No reported glycans"/>
</dbReference>
<dbReference type="GlyGen" id="Q812F8">
    <property type="glycosylation" value="3 sites, 2 N-linked glycans (2 sites)"/>
</dbReference>
<dbReference type="iPTMnet" id="Q812F8"/>
<dbReference type="PhosphoSitePlus" id="Q812F8"/>
<dbReference type="PaxDb" id="10090-ENSMUSP00000043346"/>
<dbReference type="PeptideAtlas" id="Q812F8"/>
<dbReference type="ProteomicsDB" id="295900"/>
<dbReference type="Antibodypedia" id="29519">
    <property type="antibodies" value="74 antibodies from 17 providers"/>
</dbReference>
<dbReference type="DNASU" id="103534"/>
<dbReference type="Ensembl" id="ENSMUST00000041725.14">
    <property type="protein sequence ID" value="ENSMUSP00000043346.8"/>
    <property type="gene ID" value="ENSMUSG00000036620.15"/>
</dbReference>
<dbReference type="GeneID" id="103534"/>
<dbReference type="KEGG" id="mmu:103534"/>
<dbReference type="UCSC" id="uc007iry.2">
    <property type="organism name" value="mouse"/>
</dbReference>
<dbReference type="AGR" id="MGI:2143974"/>
<dbReference type="CTD" id="11282"/>
<dbReference type="MGI" id="MGI:2143974">
    <property type="gene designation" value="Mgat4b"/>
</dbReference>
<dbReference type="VEuPathDB" id="HostDB:ENSMUSG00000036620"/>
<dbReference type="eggNOG" id="ENOG502QPQJ">
    <property type="taxonomic scope" value="Eukaryota"/>
</dbReference>
<dbReference type="GeneTree" id="ENSGT00940000156526"/>
<dbReference type="HOGENOM" id="CLU_027046_3_0_1"/>
<dbReference type="InParanoid" id="Q812F8"/>
<dbReference type="OMA" id="FLMFHND"/>
<dbReference type="OrthoDB" id="2016523at2759"/>
<dbReference type="PhylomeDB" id="Q812F8"/>
<dbReference type="TreeFam" id="TF324570"/>
<dbReference type="Reactome" id="R-MMU-975577">
    <property type="pathway name" value="N-Glycan antennae elongation"/>
</dbReference>
<dbReference type="UniPathway" id="UPA00378"/>
<dbReference type="BioGRID-ORCS" id="103534">
    <property type="hits" value="5 hits in 78 CRISPR screens"/>
</dbReference>
<dbReference type="ChiTaRS" id="Mgat4b">
    <property type="organism name" value="mouse"/>
</dbReference>
<dbReference type="PRO" id="PR:Q812F8"/>
<dbReference type="Proteomes" id="UP000000589">
    <property type="component" value="Chromosome 11"/>
</dbReference>
<dbReference type="RNAct" id="Q812F8">
    <property type="molecule type" value="protein"/>
</dbReference>
<dbReference type="Bgee" id="ENSMUSG00000036620">
    <property type="expression patterns" value="Expressed in ectoplacental cone and 250 other cell types or tissues"/>
</dbReference>
<dbReference type="ExpressionAtlas" id="Q812F8">
    <property type="expression patterns" value="baseline and differential"/>
</dbReference>
<dbReference type="GO" id="GO:0000139">
    <property type="term" value="C:Golgi membrane"/>
    <property type="evidence" value="ECO:0007669"/>
    <property type="project" value="UniProtKB-SubCell"/>
</dbReference>
<dbReference type="GO" id="GO:0008375">
    <property type="term" value="F:acetylglucosaminyltransferase activity"/>
    <property type="evidence" value="ECO:0000314"/>
    <property type="project" value="MGI"/>
</dbReference>
<dbReference type="GO" id="GO:0008454">
    <property type="term" value="F:alpha-1,3-mannosylglycoprotein 4-beta-N-acetylglucosaminyltransferase activity"/>
    <property type="evidence" value="ECO:0000250"/>
    <property type="project" value="UniProtKB"/>
</dbReference>
<dbReference type="GO" id="GO:0016757">
    <property type="term" value="F:glycosyltransferase activity"/>
    <property type="evidence" value="ECO:0000314"/>
    <property type="project" value="MGI"/>
</dbReference>
<dbReference type="GO" id="GO:0046872">
    <property type="term" value="F:metal ion binding"/>
    <property type="evidence" value="ECO:0007669"/>
    <property type="project" value="UniProtKB-KW"/>
</dbReference>
<dbReference type="GO" id="GO:0006486">
    <property type="term" value="P:protein glycosylation"/>
    <property type="evidence" value="ECO:0000250"/>
    <property type="project" value="UniProtKB"/>
</dbReference>
<dbReference type="GO" id="GO:0006487">
    <property type="term" value="P:protein N-linked glycosylation"/>
    <property type="evidence" value="ECO:0000316"/>
    <property type="project" value="MGI"/>
</dbReference>
<dbReference type="InterPro" id="IPR006759">
    <property type="entry name" value="Glyco_transf_54"/>
</dbReference>
<dbReference type="InterPro" id="IPR056576">
    <property type="entry name" value="MGAT4_A/B/C_C"/>
</dbReference>
<dbReference type="PANTHER" id="PTHR12062:SF1">
    <property type="entry name" value="ALPHA-1,3-MANNOSYL-GLYCOPROTEIN 4-BETA-N-ACETYLGLUCOSAMINYLTRANSFERASE B"/>
    <property type="match status" value="1"/>
</dbReference>
<dbReference type="PANTHER" id="PTHR12062">
    <property type="entry name" value="N-ACETYLGLUCOSAMINYLTRANSFERASE VI"/>
    <property type="match status" value="1"/>
</dbReference>
<dbReference type="Pfam" id="PF04666">
    <property type="entry name" value="MGAT4_cons"/>
    <property type="match status" value="1"/>
</dbReference>
<dbReference type="Pfam" id="PF23524">
    <property type="entry name" value="MGAT4A_C"/>
    <property type="match status" value="1"/>
</dbReference>
<sequence>MRLRNGTFLTLLLFCLCAFLSLSWYAALSGQKGDVVDIYQREFLALRDRLHAAEQESLKRSKELNLVLEEIKRAVSERQALRDGEGNRTWGRLTEDPRLKPWNVSHRHVLHLPTVFHHLPHLLAKESSLQPAVRVGQGRTGVSVVMGIPSVRREVHSYLTDTLHSLISELSPQEKEDSVIVVLIAETDPQYTSAVTENIKALFPTEIHSGLLEVISPSPHFYPDFSRLRESFGDPKERVRWRTKQNLDYCFLMMYAQSKGIYYVQLEDDIVAKPNYLSTMKNFALQQPSEDWMILEFSQLGFIGKMFKSLDLSLIVEFILMFYRDKPIDWLLDHILWVKVCNPEKDAKHCDRQKANLRIRFKPSLFQHVGTHSSLAGKIQKLKDKDFGKHALRKEHVNPPAEVSTSLKTYQHFTLEKAYLREDFFWAFTPAAGDFIRFRFFQPLRLERFFFRSGNIEHPEDKLFNTSVEVLPFDNPQSEKEALQEGRSATLRYPRSPDGYLQIGSFYKGVAEGEVDPAFGPLEALRLSIQTDSPVWVILSEIFLKKAD</sequence>
<reference key="1">
    <citation type="journal article" date="1998" name="Glycoconj. J.">
        <title>A novel second isoenzyme of the human UDP-N-acetylglucosamine:alpha1,3-D-mannoside beta1,4-N-acetylglucosaminyltransferase family: cDNA cloning, expression, and chromosomal assignment.</title>
        <authorList>
            <person name="Yoshida A."/>
            <person name="Minowa M.T."/>
            <person name="Takamatsu S."/>
            <person name="Hara T."/>
            <person name="Ikenaga H."/>
            <person name="Takeuchi M."/>
        </authorList>
    </citation>
    <scope>NUCLEOTIDE SEQUENCE [GENOMIC DNA / MRNA]</scope>
    <source>
        <strain>129/SvJ</strain>
    </source>
</reference>
<reference key="2">
    <citation type="journal article" date="2009" name="PLoS Biol.">
        <title>Lineage-specific biology revealed by a finished genome assembly of the mouse.</title>
        <authorList>
            <person name="Church D.M."/>
            <person name="Goodstadt L."/>
            <person name="Hillier L.W."/>
            <person name="Zody M.C."/>
            <person name="Goldstein S."/>
            <person name="She X."/>
            <person name="Bult C.J."/>
            <person name="Agarwala R."/>
            <person name="Cherry J.L."/>
            <person name="DiCuccio M."/>
            <person name="Hlavina W."/>
            <person name="Kapustin Y."/>
            <person name="Meric P."/>
            <person name="Maglott D."/>
            <person name="Birtle Z."/>
            <person name="Marques A.C."/>
            <person name="Graves T."/>
            <person name="Zhou S."/>
            <person name="Teague B."/>
            <person name="Potamousis K."/>
            <person name="Churas C."/>
            <person name="Place M."/>
            <person name="Herschleb J."/>
            <person name="Runnheim R."/>
            <person name="Forrest D."/>
            <person name="Amos-Landgraf J."/>
            <person name="Schwartz D.C."/>
            <person name="Cheng Z."/>
            <person name="Lindblad-Toh K."/>
            <person name="Eichler E.E."/>
            <person name="Ponting C.P."/>
        </authorList>
    </citation>
    <scope>NUCLEOTIDE SEQUENCE [LARGE SCALE GENOMIC DNA]</scope>
    <source>
        <strain>C57BL/6J</strain>
    </source>
</reference>
<reference key="3">
    <citation type="journal article" date="2005" name="Science">
        <title>The transcriptional landscape of the mammalian genome.</title>
        <authorList>
            <person name="Carninci P."/>
            <person name="Kasukawa T."/>
            <person name="Katayama S."/>
            <person name="Gough J."/>
            <person name="Frith M.C."/>
            <person name="Maeda N."/>
            <person name="Oyama R."/>
            <person name="Ravasi T."/>
            <person name="Lenhard B."/>
            <person name="Wells C."/>
            <person name="Kodzius R."/>
            <person name="Shimokawa K."/>
            <person name="Bajic V.B."/>
            <person name="Brenner S.E."/>
            <person name="Batalov S."/>
            <person name="Forrest A.R."/>
            <person name="Zavolan M."/>
            <person name="Davis M.J."/>
            <person name="Wilming L.G."/>
            <person name="Aidinis V."/>
            <person name="Allen J.E."/>
            <person name="Ambesi-Impiombato A."/>
            <person name="Apweiler R."/>
            <person name="Aturaliya R.N."/>
            <person name="Bailey T.L."/>
            <person name="Bansal M."/>
            <person name="Baxter L."/>
            <person name="Beisel K.W."/>
            <person name="Bersano T."/>
            <person name="Bono H."/>
            <person name="Chalk A.M."/>
            <person name="Chiu K.P."/>
            <person name="Choudhary V."/>
            <person name="Christoffels A."/>
            <person name="Clutterbuck D.R."/>
            <person name="Crowe M.L."/>
            <person name="Dalla E."/>
            <person name="Dalrymple B.P."/>
            <person name="de Bono B."/>
            <person name="Della Gatta G."/>
            <person name="di Bernardo D."/>
            <person name="Down T."/>
            <person name="Engstrom P."/>
            <person name="Fagiolini M."/>
            <person name="Faulkner G."/>
            <person name="Fletcher C.F."/>
            <person name="Fukushima T."/>
            <person name="Furuno M."/>
            <person name="Futaki S."/>
            <person name="Gariboldi M."/>
            <person name="Georgii-Hemming P."/>
            <person name="Gingeras T.R."/>
            <person name="Gojobori T."/>
            <person name="Green R.E."/>
            <person name="Gustincich S."/>
            <person name="Harbers M."/>
            <person name="Hayashi Y."/>
            <person name="Hensch T.K."/>
            <person name="Hirokawa N."/>
            <person name="Hill D."/>
            <person name="Huminiecki L."/>
            <person name="Iacono M."/>
            <person name="Ikeo K."/>
            <person name="Iwama A."/>
            <person name="Ishikawa T."/>
            <person name="Jakt M."/>
            <person name="Kanapin A."/>
            <person name="Katoh M."/>
            <person name="Kawasawa Y."/>
            <person name="Kelso J."/>
            <person name="Kitamura H."/>
            <person name="Kitano H."/>
            <person name="Kollias G."/>
            <person name="Krishnan S.P."/>
            <person name="Kruger A."/>
            <person name="Kummerfeld S.K."/>
            <person name="Kurochkin I.V."/>
            <person name="Lareau L.F."/>
            <person name="Lazarevic D."/>
            <person name="Lipovich L."/>
            <person name="Liu J."/>
            <person name="Liuni S."/>
            <person name="McWilliam S."/>
            <person name="Madan Babu M."/>
            <person name="Madera M."/>
            <person name="Marchionni L."/>
            <person name="Matsuda H."/>
            <person name="Matsuzawa S."/>
            <person name="Miki H."/>
            <person name="Mignone F."/>
            <person name="Miyake S."/>
            <person name="Morris K."/>
            <person name="Mottagui-Tabar S."/>
            <person name="Mulder N."/>
            <person name="Nakano N."/>
            <person name="Nakauchi H."/>
            <person name="Ng P."/>
            <person name="Nilsson R."/>
            <person name="Nishiguchi S."/>
            <person name="Nishikawa S."/>
            <person name="Nori F."/>
            <person name="Ohara O."/>
            <person name="Okazaki Y."/>
            <person name="Orlando V."/>
            <person name="Pang K.C."/>
            <person name="Pavan W.J."/>
            <person name="Pavesi G."/>
            <person name="Pesole G."/>
            <person name="Petrovsky N."/>
            <person name="Piazza S."/>
            <person name="Reed J."/>
            <person name="Reid J.F."/>
            <person name="Ring B.Z."/>
            <person name="Ringwald M."/>
            <person name="Rost B."/>
            <person name="Ruan Y."/>
            <person name="Salzberg S.L."/>
            <person name="Sandelin A."/>
            <person name="Schneider C."/>
            <person name="Schoenbach C."/>
            <person name="Sekiguchi K."/>
            <person name="Semple C.A."/>
            <person name="Seno S."/>
            <person name="Sessa L."/>
            <person name="Sheng Y."/>
            <person name="Shibata Y."/>
            <person name="Shimada H."/>
            <person name="Shimada K."/>
            <person name="Silva D."/>
            <person name="Sinclair B."/>
            <person name="Sperling S."/>
            <person name="Stupka E."/>
            <person name="Sugiura K."/>
            <person name="Sultana R."/>
            <person name="Takenaka Y."/>
            <person name="Taki K."/>
            <person name="Tammoja K."/>
            <person name="Tan S.L."/>
            <person name="Tang S."/>
            <person name="Taylor M.S."/>
            <person name="Tegner J."/>
            <person name="Teichmann S.A."/>
            <person name="Ueda H.R."/>
            <person name="van Nimwegen E."/>
            <person name="Verardo R."/>
            <person name="Wei C.L."/>
            <person name="Yagi K."/>
            <person name="Yamanishi H."/>
            <person name="Zabarovsky E."/>
            <person name="Zhu S."/>
            <person name="Zimmer A."/>
            <person name="Hide W."/>
            <person name="Bult C."/>
            <person name="Grimmond S.M."/>
            <person name="Teasdale R.D."/>
            <person name="Liu E.T."/>
            <person name="Brusic V."/>
            <person name="Quackenbush J."/>
            <person name="Wahlestedt C."/>
            <person name="Mattick J.S."/>
            <person name="Hume D.A."/>
            <person name="Kai C."/>
            <person name="Sasaki D."/>
            <person name="Tomaru Y."/>
            <person name="Fukuda S."/>
            <person name="Kanamori-Katayama M."/>
            <person name="Suzuki M."/>
            <person name="Aoki J."/>
            <person name="Arakawa T."/>
            <person name="Iida J."/>
            <person name="Imamura K."/>
            <person name="Itoh M."/>
            <person name="Kato T."/>
            <person name="Kawaji H."/>
            <person name="Kawagashira N."/>
            <person name="Kawashima T."/>
            <person name="Kojima M."/>
            <person name="Kondo S."/>
            <person name="Konno H."/>
            <person name="Nakano K."/>
            <person name="Ninomiya N."/>
            <person name="Nishio T."/>
            <person name="Okada M."/>
            <person name="Plessy C."/>
            <person name="Shibata K."/>
            <person name="Shiraki T."/>
            <person name="Suzuki S."/>
            <person name="Tagami M."/>
            <person name="Waki K."/>
            <person name="Watahiki A."/>
            <person name="Okamura-Oho Y."/>
            <person name="Suzuki H."/>
            <person name="Kawai J."/>
            <person name="Hayashizaki Y."/>
        </authorList>
    </citation>
    <scope>NUCLEOTIDE SEQUENCE [LARGE SCALE MRNA] OF 1-495</scope>
    <source>
        <strain>NOD</strain>
    </source>
</reference>
<reference key="4">
    <citation type="journal article" date="2004" name="Genome Res.">
        <title>The status, quality, and expansion of the NIH full-length cDNA project: the Mammalian Gene Collection (MGC).</title>
        <authorList>
            <consortium name="The MGC Project Team"/>
        </authorList>
    </citation>
    <scope>NUCLEOTIDE SEQUENCE [LARGE SCALE MRNA] OF 208-548</scope>
    <source>
        <strain>FVB/N</strain>
        <tissue>Colon</tissue>
    </source>
</reference>
<evidence type="ECO:0000250" key="1">
    <source>
        <dbReference type="UniProtKB" id="O77836"/>
    </source>
</evidence>
<evidence type="ECO:0000250" key="2">
    <source>
        <dbReference type="UniProtKB" id="Q9D4R2"/>
    </source>
</evidence>
<evidence type="ECO:0000250" key="3">
    <source>
        <dbReference type="UniProtKB" id="Q9UQ53"/>
    </source>
</evidence>
<evidence type="ECO:0000255" key="4"/>
<evidence type="ECO:0000305" key="5"/>
<evidence type="ECO:0000312" key="6">
    <source>
        <dbReference type="MGI" id="MGI:2143974"/>
    </source>
</evidence>
<gene>
    <name evidence="6" type="primary">Mgat4b</name>
</gene>
<proteinExistence type="evidence at transcript level"/>
<comment type="function">
    <text evidence="3">Glycosyltransferase that catalyzes the transfer of GlcNAc from UDP-GlcNAc to the GlcNAcbeta1-2Manalpha1-3 arm of the core structure of N-linked glycans through a beta1-4 linkage and participates in the production of tri- and tetra-antennary N-linked sugar chains. Prefers complex-type N-glycans over hybrid-types. Has lower affinities for donors or acceptors than MGAT4A, suggesting that, under physiological conditions, it is not the main contributor in N-glycan biosynthesis.</text>
</comment>
<comment type="catalytic activity">
    <reaction evidence="3">
        <text>N(4)-{beta-D-GlcNAc-(1-&gt;2)-alpha-D-Man-(1-&gt;3)-[beta-D-GlcNAc-(1-&gt;2)-alpha-D-Man-(1-&gt;6)]-beta-D-Man-(1-&gt;4)-beta-D-GlcNAc-(1-&gt;4)-beta-D-GlcNAc}-L-asparaginyl-[protein] + UDP-N-acetyl-alpha-D-glucosamine = N(4)-{beta-D-GlcNAc-(1-&gt;2)-[beta-D-GlcNAc-(1-&gt;4)]-alpha-D-Man-(1-&gt;3)-[beta-D-GlcNAc-(1-&gt;2)-alpha-D-Man-(1-&gt;6)]-beta-D-Man-(1-&gt;4)-beta-D-GlcNAc-(1-&gt;4)-beta-D-GlcNAc}-L-asparaginyl-[protein] + UDP + H(+)</text>
        <dbReference type="Rhea" id="RHEA:16057"/>
        <dbReference type="Rhea" id="RHEA-COMP:13526"/>
        <dbReference type="Rhea" id="RHEA-COMP:14374"/>
        <dbReference type="ChEBI" id="CHEBI:15378"/>
        <dbReference type="ChEBI" id="CHEBI:57705"/>
        <dbReference type="ChEBI" id="CHEBI:58223"/>
        <dbReference type="ChEBI" id="CHEBI:60651"/>
        <dbReference type="ChEBI" id="CHEBI:139507"/>
        <dbReference type="EC" id="2.4.1.145"/>
    </reaction>
    <physiologicalReaction direction="left-to-right" evidence="3">
        <dbReference type="Rhea" id="RHEA:16058"/>
    </physiologicalReaction>
</comment>
<comment type="catalytic activity">
    <reaction evidence="3">
        <text>an N(4)-{beta-D-GlcNAc-(1-&gt;2)-alpha-D-Man-(1-&gt;3)-[alpha-D-Man-(1-&gt;6)]-beta-D-Man-(1-&gt;4)-beta-D-GlcNAc-(1-&gt;4)-beta-D-GlcNAc}-L-asparaginyl-[protein] + UDP-N-acetyl-alpha-D-glucosamine = an N(4)-{beta-D-GlcNAc-(1-&gt;2)-[beta-D-GlcNAc-(1-&gt;4)]-alpha-D-Man-(1-&gt;3)-[alpha-D-Man-(1-&gt;6)]-beta-D-Man-(1-&gt;4)-beta-D-GlcNAc-(1-&gt;4)-beta-D-GlcNAc}-L-asparaginyl-[protein] + UDP + H(+)</text>
        <dbReference type="Rhea" id="RHEA:69615"/>
        <dbReference type="Rhea" id="RHEA-COMP:14369"/>
        <dbReference type="Rhea" id="RHEA-COMP:17732"/>
        <dbReference type="ChEBI" id="CHEBI:15378"/>
        <dbReference type="ChEBI" id="CHEBI:57705"/>
        <dbReference type="ChEBI" id="CHEBI:58223"/>
        <dbReference type="ChEBI" id="CHEBI:60615"/>
        <dbReference type="ChEBI" id="CHEBI:187873"/>
    </reaction>
    <physiologicalReaction direction="left-to-right" evidence="3">
        <dbReference type="Rhea" id="RHEA:69616"/>
    </physiologicalReaction>
</comment>
<comment type="catalytic activity">
    <reaction evidence="3">
        <text>an N(4)-{beta-D-GlcNAc-(1-&gt;2)-alpha-D-Man-(1-&gt;3)-[beta-D-GlcNAc-(1-&gt;2)-[beta-D-GlcNAc-(1-&gt;6)]-alpha-D-Man-(1-&gt;6)]-beta-D-Man-(1-&gt;4)-beta-D-GlcNAc-(1-&gt;4)-beta-D-GlcNAc}-L-asparaginyl-[protein] + UDP-N-acetyl-alpha-D-glucosamine = an N(4)-{beta-D-GlcNAc-(1-&gt;2)-[beta-D-GlcNAc-(1-&gt;4)]-alpha-D-Man-(1-&gt;3)-[beta-D-GlcNAc-(1-&gt;2)-[beta-D-GlcNAc-(1-&gt;6)]-alpha-D-Man-(1-&gt;6)]-beta-D-Man-(1-&gt;4)-beta-D-GlcNAc-(1-&gt;4)-beta-D-GlcNAc}-L-asparaginyl-[protein] + UDP + H(+)</text>
        <dbReference type="Rhea" id="RHEA:69619"/>
        <dbReference type="Rhea" id="RHEA-COMP:17733"/>
        <dbReference type="Rhea" id="RHEA-COMP:17734"/>
        <dbReference type="ChEBI" id="CHEBI:15378"/>
        <dbReference type="ChEBI" id="CHEBI:57705"/>
        <dbReference type="ChEBI" id="CHEBI:58223"/>
        <dbReference type="ChEBI" id="CHEBI:187874"/>
        <dbReference type="ChEBI" id="CHEBI:187875"/>
    </reaction>
    <physiologicalReaction direction="left-to-right" evidence="3">
        <dbReference type="Rhea" id="RHEA:69620"/>
    </physiologicalReaction>
</comment>
<comment type="catalytic activity">
    <reaction evidence="3">
        <text>an N(4)-{beta-D-GlcNAc-(1-&gt;2)-alpha-D-Man-(1-&gt;3)-[beta-D-GlcNAc-(1-&gt;2)-alpha-D-Man-(1-&gt;6)]-beta-D-Man-(1-&gt;4)-beta-D-GlcNAc-(1-&gt;4)-[alpha-L-Fuc-(1-&gt;6)]-beta-D-GlcNAc}-L-asparaginyl-[protein] + UDP-N-acetyl-alpha-D-glucosamine = N(4)-{beta-D-GlcNAc-(1-&gt;2)-[beta-D-GlcNAc-(1-&gt;4)]-alpha-D-Man-(1-&gt;3)-[beta-D-GlcNAc-(1-&gt;2)-alpha-D-Man-(1-&gt;6)]-beta-D-Man-(1-&gt;4)-beta-D-GlcNAc-(1-&gt;4)-[alpha-L-Fuc-(1-&gt;6)]-beta-D-GlcNAc}-asparaginyl-[protein] + UDP + H(+)</text>
        <dbReference type="Rhea" id="RHEA:69623"/>
        <dbReference type="Rhea" id="RHEA-COMP:13532"/>
        <dbReference type="Rhea" id="RHEA-COMP:18198"/>
        <dbReference type="ChEBI" id="CHEBI:15378"/>
        <dbReference type="ChEBI" id="CHEBI:57705"/>
        <dbReference type="ChEBI" id="CHEBI:58223"/>
        <dbReference type="ChEBI" id="CHEBI:137207"/>
        <dbReference type="ChEBI" id="CHEBI:187877"/>
    </reaction>
    <physiologicalReaction direction="left-to-right" evidence="3">
        <dbReference type="Rhea" id="RHEA:69624"/>
    </physiologicalReaction>
</comment>
<comment type="catalytic activity">
    <reaction evidence="3">
        <text>an N(4)-{beta-D-GlcNAc-(1-&gt;2)-alpha-D-Man-(1-&gt;3)-[beta-D-Gal-(1-&gt;4)-beta-D-GlcNAc-(1-&gt;2)-alpha-D-Man-(1-&gt;6)]-beta-D-Man-(1-&gt;4)-beta-D-GlcNAc-(1-&gt;4)-beta-D-GlcNAc}-L-asparaginyl-[protein] + UDP-N-acetyl-alpha-D-glucosamine = an N(4)-{beta-D-GlcNAc-(1-&gt;2)-[beta-D-GlcNAc-(1-&gt;4)]-alpha-D-Man-(1-&gt;3)-[beta-D-Gal-(1-&gt;4)-beta-D-GlcNAc-(1-&gt;2)-alpha-D-Man-(1-&gt;6)]-beta-D-Man-(1-&gt;4)-beta-D-GlcNAc-(1-&gt;4)-beta-D-GlcNAc}-L-asparaginyl-[protein] + UDP + H(+)</text>
        <dbReference type="Rhea" id="RHEA:69627"/>
        <dbReference type="Rhea" id="RHEA-COMP:17737"/>
        <dbReference type="Rhea" id="RHEA-COMP:17738"/>
        <dbReference type="ChEBI" id="CHEBI:15378"/>
        <dbReference type="ChEBI" id="CHEBI:57705"/>
        <dbReference type="ChEBI" id="CHEBI:58223"/>
        <dbReference type="ChEBI" id="CHEBI:187878"/>
        <dbReference type="ChEBI" id="CHEBI:187879"/>
    </reaction>
    <physiologicalReaction direction="left-to-right" evidence="3">
        <dbReference type="Rhea" id="RHEA:69628"/>
    </physiologicalReaction>
</comment>
<comment type="catalytic activity">
    <reaction evidence="3">
        <text>N(4)-{beta-D-GlcNAc-(1-&gt;2)-alpha-D-Man-(1-&gt;3)-[alpha-D-Man-(1-&gt;3)-{alpha-D-Man-(1-&gt;6)}-alpha-D-Man-(1-&gt;6)]-beta-D-Man-(1-&gt;4)-beta-D-GlcNAc-(1-&gt;4)-beta-D-GlcNAc}-asparaginyl-[protein] + UDP-N-acetyl-alpha-D-glucosamine = N(4)-{beta-D-GlcNAc-(1-&gt;2)-[beta-D-GlcNAc-(1-&gt;4)]-alpha-D-Man-(1-&gt;3)-[alpha-D-Man-(1-&gt;3)-{alpha-D-Man-(1-&gt;6)}-alpha-D-Man-(1-&gt;6)]-beta-D-Man-(1-&gt;4)-beta-D-GlcNAc-(1-&gt;4)-beta-D-GlcNAc}-asparaginyl-[protein] + UDP + H(+)</text>
        <dbReference type="Rhea" id="RHEA:69631"/>
        <dbReference type="Rhea" id="RHEA-COMP:17739"/>
        <dbReference type="Rhea" id="RHEA-COMP:17740"/>
        <dbReference type="ChEBI" id="CHEBI:15378"/>
        <dbReference type="ChEBI" id="CHEBI:57705"/>
        <dbReference type="ChEBI" id="CHEBI:58223"/>
        <dbReference type="ChEBI" id="CHEBI:187880"/>
        <dbReference type="ChEBI" id="CHEBI:187881"/>
    </reaction>
    <physiologicalReaction direction="left-to-right" evidence="3">
        <dbReference type="Rhea" id="RHEA:69632"/>
    </physiologicalReaction>
</comment>
<comment type="catalytic activity">
    <reaction evidence="3">
        <text>N(4)-{beta-D-GlcNAc-(1-&gt;2)-alpha-D-Man-(1-&gt;3)-beta-D-Man-(1-&gt;4)-beta-D-GlcNAc-(1-&gt;4)-beta-D-GlcNAc}-asparaginyl-[protein] + UDP-N-acetyl-alpha-D-glucosamine = N(4)-{beta-D-GlcNAc-(1-&gt;2)-[beta-D-GlcNAc-(1-&gt;4)]-alpha-D-Man-(1-&gt;3)-beta-D-Man-(1-&gt;4)-beta-D-GlcNAc-(1-&gt;4)-beta-D-GlcNAc}-asparaginyl-[protein] + UDP + H(+)</text>
        <dbReference type="Rhea" id="RHEA:69635"/>
        <dbReference type="Rhea" id="RHEA-COMP:17741"/>
        <dbReference type="Rhea" id="RHEA-COMP:17742"/>
        <dbReference type="ChEBI" id="CHEBI:15378"/>
        <dbReference type="ChEBI" id="CHEBI:57705"/>
        <dbReference type="ChEBI" id="CHEBI:58223"/>
        <dbReference type="ChEBI" id="CHEBI:187882"/>
        <dbReference type="ChEBI" id="CHEBI:187883"/>
    </reaction>
    <physiologicalReaction direction="left-to-right" evidence="3">
        <dbReference type="Rhea" id="RHEA:69636"/>
    </physiologicalReaction>
</comment>
<comment type="cofactor">
    <cofactor evidence="1">
        <name>a divalent metal cation</name>
        <dbReference type="ChEBI" id="CHEBI:60240"/>
    </cofactor>
</comment>
<comment type="pathway">
    <text evidence="3">Protein modification; protein glycosylation.</text>
</comment>
<comment type="subunit">
    <text evidence="3">Interacts with SLC35A3.</text>
</comment>
<comment type="subcellular location">
    <subcellularLocation>
        <location evidence="2">Golgi apparatus membrane</location>
        <topology evidence="2">Single-pass type II membrane protein</topology>
    </subcellularLocation>
    <text evidence="3">A processed soluble form also exists.</text>
</comment>
<comment type="PTM">
    <text evidence="3">N-glycosylated.</text>
</comment>
<comment type="similarity">
    <text evidence="5">Belongs to the glycosyltransferase 54 family.</text>
</comment>
<comment type="sequence caution" evidence="5">
    <conflict type="erroneous initiation">
        <sequence resource="EMBL-CDS" id="AAH26638"/>
    </conflict>
</comment>
<comment type="sequence caution" evidence="5">
    <conflict type="erroneous initiation">
        <sequence resource="EMBL-CDS" id="AAH31613"/>
    </conflict>
</comment>
<keyword id="KW-0175">Coiled coil</keyword>
<keyword id="KW-0325">Glycoprotein</keyword>
<keyword id="KW-0328">Glycosyltransferase</keyword>
<keyword id="KW-0333">Golgi apparatus</keyword>
<keyword id="KW-0472">Membrane</keyword>
<keyword id="KW-0479">Metal-binding</keyword>
<keyword id="KW-1185">Reference proteome</keyword>
<keyword id="KW-0735">Signal-anchor</keyword>
<keyword id="KW-0808">Transferase</keyword>
<keyword id="KW-0812">Transmembrane</keyword>
<keyword id="KW-1133">Transmembrane helix</keyword>
<accession>Q812F8</accession>
<accession>Q3U2D9</accession>
<accession>Q812F9</accession>
<accession>Q8R0L4</accession>
<feature type="chain" id="PRO_0000288594" description="Alpha-1,3-mannosyl-glycoprotein 4-beta-N-acetylglucosaminyltransferase B">
    <location>
        <begin position="1"/>
        <end position="548"/>
    </location>
</feature>
<feature type="topological domain" description="Cytoplasmic" evidence="4">
    <location>
        <begin position="1"/>
        <end position="7"/>
    </location>
</feature>
<feature type="transmembrane region" description="Helical; Signal-anchor for type II membrane protein" evidence="4">
    <location>
        <begin position="8"/>
        <end position="28"/>
    </location>
</feature>
<feature type="topological domain" description="Lumenal" evidence="4">
    <location>
        <begin position="29"/>
        <end position="548"/>
    </location>
</feature>
<feature type="coiled-coil region" evidence="4">
    <location>
        <begin position="36"/>
        <end position="83"/>
    </location>
</feature>
<feature type="glycosylation site" description="N-linked (GlcNAc...) asparagine" evidence="4">
    <location>
        <position position="87"/>
    </location>
</feature>
<feature type="glycosylation site" description="N-linked (GlcNAc...) asparagine" evidence="4">
    <location>
        <position position="103"/>
    </location>
</feature>
<feature type="sequence conflict" description="In Ref. 1; BAC55019." evidence="5" ref="1">
    <original>EH</original>
    <variation>SY</variation>
    <location>
        <begin position="395"/>
        <end position="396"/>
    </location>
</feature>